<dbReference type="EMBL" id="CU468230">
    <property type="protein sequence ID" value="CAO99837.1"/>
    <property type="molecule type" value="Genomic_DNA"/>
</dbReference>
<dbReference type="SMR" id="B0VQU1"/>
<dbReference type="KEGG" id="abm:ABSDF0446"/>
<dbReference type="HOGENOM" id="CLU_072439_5_0_6"/>
<dbReference type="Proteomes" id="UP000001741">
    <property type="component" value="Chromosome"/>
</dbReference>
<dbReference type="GO" id="GO:1990904">
    <property type="term" value="C:ribonucleoprotein complex"/>
    <property type="evidence" value="ECO:0007669"/>
    <property type="project" value="UniProtKB-KW"/>
</dbReference>
<dbReference type="GO" id="GO:0005840">
    <property type="term" value="C:ribosome"/>
    <property type="evidence" value="ECO:0007669"/>
    <property type="project" value="UniProtKB-KW"/>
</dbReference>
<dbReference type="GO" id="GO:0019843">
    <property type="term" value="F:rRNA binding"/>
    <property type="evidence" value="ECO:0007669"/>
    <property type="project" value="UniProtKB-UniRule"/>
</dbReference>
<dbReference type="GO" id="GO:0003735">
    <property type="term" value="F:structural constituent of ribosome"/>
    <property type="evidence" value="ECO:0007669"/>
    <property type="project" value="InterPro"/>
</dbReference>
<dbReference type="GO" id="GO:0006412">
    <property type="term" value="P:translation"/>
    <property type="evidence" value="ECO:0007669"/>
    <property type="project" value="UniProtKB-UniRule"/>
</dbReference>
<dbReference type="FunFam" id="3.30.420.80:FF:000001">
    <property type="entry name" value="30S ribosomal protein S11"/>
    <property type="match status" value="1"/>
</dbReference>
<dbReference type="Gene3D" id="3.30.420.80">
    <property type="entry name" value="Ribosomal protein S11"/>
    <property type="match status" value="1"/>
</dbReference>
<dbReference type="HAMAP" id="MF_01310">
    <property type="entry name" value="Ribosomal_uS11"/>
    <property type="match status" value="1"/>
</dbReference>
<dbReference type="InterPro" id="IPR001971">
    <property type="entry name" value="Ribosomal_uS11"/>
</dbReference>
<dbReference type="InterPro" id="IPR019981">
    <property type="entry name" value="Ribosomal_uS11_bac-type"/>
</dbReference>
<dbReference type="InterPro" id="IPR018102">
    <property type="entry name" value="Ribosomal_uS11_CS"/>
</dbReference>
<dbReference type="InterPro" id="IPR036967">
    <property type="entry name" value="Ribosomal_uS11_sf"/>
</dbReference>
<dbReference type="NCBIfam" id="NF003698">
    <property type="entry name" value="PRK05309.1"/>
    <property type="match status" value="1"/>
</dbReference>
<dbReference type="NCBIfam" id="TIGR03632">
    <property type="entry name" value="uS11_bact"/>
    <property type="match status" value="1"/>
</dbReference>
<dbReference type="PANTHER" id="PTHR11759">
    <property type="entry name" value="40S RIBOSOMAL PROTEIN S14/30S RIBOSOMAL PROTEIN S11"/>
    <property type="match status" value="1"/>
</dbReference>
<dbReference type="Pfam" id="PF00411">
    <property type="entry name" value="Ribosomal_S11"/>
    <property type="match status" value="1"/>
</dbReference>
<dbReference type="PIRSF" id="PIRSF002131">
    <property type="entry name" value="Ribosomal_S11"/>
    <property type="match status" value="1"/>
</dbReference>
<dbReference type="SUPFAM" id="SSF53137">
    <property type="entry name" value="Translational machinery components"/>
    <property type="match status" value="1"/>
</dbReference>
<dbReference type="PROSITE" id="PS00054">
    <property type="entry name" value="RIBOSOMAL_S11"/>
    <property type="match status" value="1"/>
</dbReference>
<sequence length="128" mass="13534">MAKDTRTRKKVTRTVSEGVAHIHASFNNTIVTITDRQGNALAWATSGGQGFRGSRKSTPFAAQVAAEVAGKAALDYGLKNLDVLVKGPGPGRESAVRALGAVGYKINSITDVTPIPHNGCRPPKKRRV</sequence>
<protein>
    <recommendedName>
        <fullName evidence="1">Small ribosomal subunit protein uS11</fullName>
    </recommendedName>
    <alternativeName>
        <fullName evidence="2">30S ribosomal protein S11</fullName>
    </alternativeName>
</protein>
<organism>
    <name type="scientific">Acinetobacter baumannii (strain SDF)</name>
    <dbReference type="NCBI Taxonomy" id="509170"/>
    <lineage>
        <taxon>Bacteria</taxon>
        <taxon>Pseudomonadati</taxon>
        <taxon>Pseudomonadota</taxon>
        <taxon>Gammaproteobacteria</taxon>
        <taxon>Moraxellales</taxon>
        <taxon>Moraxellaceae</taxon>
        <taxon>Acinetobacter</taxon>
        <taxon>Acinetobacter calcoaceticus/baumannii complex</taxon>
    </lineage>
</organism>
<accession>B0VQU1</accession>
<comment type="function">
    <text evidence="1">Located on the platform of the 30S subunit, it bridges several disparate RNA helices of the 16S rRNA. Forms part of the Shine-Dalgarno cleft in the 70S ribosome.</text>
</comment>
<comment type="subunit">
    <text evidence="1">Part of the 30S ribosomal subunit. Interacts with proteins S7 and S18. Binds to IF-3.</text>
</comment>
<comment type="similarity">
    <text evidence="1">Belongs to the universal ribosomal protein uS11 family.</text>
</comment>
<evidence type="ECO:0000255" key="1">
    <source>
        <dbReference type="HAMAP-Rule" id="MF_01310"/>
    </source>
</evidence>
<evidence type="ECO:0000305" key="2"/>
<reference key="1">
    <citation type="journal article" date="2008" name="PLoS ONE">
        <title>Comparative analysis of Acinetobacters: three genomes for three lifestyles.</title>
        <authorList>
            <person name="Vallenet D."/>
            <person name="Nordmann P."/>
            <person name="Barbe V."/>
            <person name="Poirel L."/>
            <person name="Mangenot S."/>
            <person name="Bataille E."/>
            <person name="Dossat C."/>
            <person name="Gas S."/>
            <person name="Kreimeyer A."/>
            <person name="Lenoble P."/>
            <person name="Oztas S."/>
            <person name="Poulain J."/>
            <person name="Segurens B."/>
            <person name="Robert C."/>
            <person name="Abergel C."/>
            <person name="Claverie J.-M."/>
            <person name="Raoult D."/>
            <person name="Medigue C."/>
            <person name="Weissenbach J."/>
            <person name="Cruveiller S."/>
        </authorList>
    </citation>
    <scope>NUCLEOTIDE SEQUENCE [LARGE SCALE GENOMIC DNA]</scope>
    <source>
        <strain>SDF</strain>
    </source>
</reference>
<gene>
    <name evidence="1" type="primary">rpsK</name>
    <name type="ordered locus">ABSDF0446</name>
</gene>
<proteinExistence type="inferred from homology"/>
<keyword id="KW-0687">Ribonucleoprotein</keyword>
<keyword id="KW-0689">Ribosomal protein</keyword>
<keyword id="KW-0694">RNA-binding</keyword>
<keyword id="KW-0699">rRNA-binding</keyword>
<feature type="chain" id="PRO_1000141043" description="Small ribosomal subunit protein uS11">
    <location>
        <begin position="1"/>
        <end position="128"/>
    </location>
</feature>
<name>RS11_ACIBS</name>